<sequence length="216" mass="24151">MVCVLVLAAAAGAVAVFLILRIWVVLRSMDVTPRESLSILVVAGSGGHTTEILRLLGSLSNAYSPRHYVIADTDEMSANKINSFELDRADRDPSNMYTKYYIHRIPRSREVQQSWPSTVFTTLHSMWLSFPLIHRVKPDLVLCNGPGTCVPICVSALLLGILGIKKVIIVYVESICRVETLSMSGKILFHLSDYFIVQWPALKEKYPKSVYLGRIV</sequence>
<comment type="function">
    <text evidence="3 7">Part of the UDP-N-acetylglucosamine transferase complex that operates in the biosynthetic pathway of dolichol-linked oligosaccharides, the glycan precursors employed in protein asparagine (N)-glycosylation. The assembly of dolichol-linked oligosaccharides begins on the cytosolic side of the endoplasmic reticulum membrane and finishes in its lumen. The sequential addition of sugars to dolichol pyrophosphate produces dolichol-linked oligosaccharides containing fourteen sugars, including two GlcNAcs, nine mannoses and three glucoses. Once assembled, the oligosaccharides are transferred from the lipid to nascent proteins by oligosaccharyltransferases. Functions as a protein-membrane adapter recruiting ALG13 at the cytoplasmic face of the endoplasmic reticulum, where the complex catalyzes the second step of dolichol pyrophosphate biosynthesis, transferring a beta1,4-linked N-acetylglucosamine (GlcNAc) from UDP-GlcNAc to GlcNAc-pyrophosphatedolichol (Gn-PDol) to produce N,N'-diacetylchitobiosyl diphosphodolichol. N,N'-diacetylchitobiosyl diphosphodolichol is a substrate for ALG1, the following enzyme in the biosynthetic pathway.</text>
</comment>
<comment type="subunit">
    <text evidence="3 7">Forms with ALG13 the active heterodimeric UDP-N-acetylglucosamine transferase complex.</text>
</comment>
<comment type="subcellular location">
    <subcellularLocation>
        <location evidence="3">Endoplasmic reticulum membrane</location>
        <topology evidence="2">Single-pass membrane protein</topology>
    </subcellularLocation>
</comment>
<comment type="disease" evidence="4 7">
    <disease id="DI-04339">
        <name>Myasthenic syndrome, congenital, 15</name>
        <acronym>CMS15</acronym>
        <description>A form of congenital myasthenic syndrome, a group of disorders characterized by failure of neuromuscular transmission, including pre-synaptic, synaptic, and post-synaptic disorders that are not of autoimmune origin. Clinical features are easy fatigability and muscle weakness.</description>
        <dbReference type="MIM" id="616227"/>
    </disease>
    <text>The disease is caused by variants affecting the gene represented in this entry.</text>
</comment>
<comment type="disease" evidence="6">
    <disease id="DI-05919">
        <name>Intellectual developmental disorder with epilepsy, behavioral abnormalities, and coarse facies</name>
        <acronym>IDDEBF</acronym>
        <description>An autosomal recessive neurodevelopmental disorder that manifests in early infancy with infantile spasms and developmental delay. Clinical features include severely impaired intellectual development, epilepsy, autism, hyperactivity and other behavioral problems, and coarse facies. Brain MRI findings may include delayed myelination in the deep parietal lobes.</description>
        <dbReference type="MIM" id="619031"/>
    </disease>
    <text>The disease may be caused by variants affecting the gene represented in this entry.</text>
</comment>
<comment type="disease" evidence="5 7">
    <disease id="DI-05924">
        <name>Myopathy, epilepsy, and progressive cerebral atrophy</name>
        <acronym>MEPCA</acronym>
        <description>An autosomal recessive disorder characterized by severe, early lethal neurodegeneration, myasthenic and myopathic features, progressive cerebral atrophy with myelination defects, and intractable epilepsy.</description>
        <dbReference type="MIM" id="619036"/>
    </disease>
    <text>The disease may be caused by variants affecting the gene represented in this entry.</text>
</comment>
<comment type="similarity">
    <text evidence="8">Belongs to the ALG14 family.</text>
</comment>
<dbReference type="EMBL" id="AK289395">
    <property type="protein sequence ID" value="BAF82084.1"/>
    <property type="molecule type" value="mRNA"/>
</dbReference>
<dbReference type="EMBL" id="CH471097">
    <property type="protein sequence ID" value="EAW73027.1"/>
    <property type="molecule type" value="Genomic_DNA"/>
</dbReference>
<dbReference type="EMBL" id="BC011706">
    <property type="protein sequence ID" value="AAH11706.1"/>
    <property type="molecule type" value="mRNA"/>
</dbReference>
<dbReference type="CCDS" id="CCDS752.1"/>
<dbReference type="RefSeq" id="NP_001292171.1">
    <property type="nucleotide sequence ID" value="NM_001305242.1"/>
</dbReference>
<dbReference type="RefSeq" id="NP_659425.1">
    <property type="nucleotide sequence ID" value="NM_144988.4"/>
</dbReference>
<dbReference type="SMR" id="Q96F25"/>
<dbReference type="BioGRID" id="128278">
    <property type="interactions" value="11"/>
</dbReference>
<dbReference type="FunCoup" id="Q96F25">
    <property type="interactions" value="689"/>
</dbReference>
<dbReference type="IntAct" id="Q96F25">
    <property type="interactions" value="10"/>
</dbReference>
<dbReference type="STRING" id="9606.ENSP00000359224"/>
<dbReference type="CAZy" id="GT1">
    <property type="family name" value="Glycosyltransferase Family 1"/>
</dbReference>
<dbReference type="GlyGen" id="Q96F25">
    <property type="glycosylation" value="1 site, 1 O-linked glycan (1 site)"/>
</dbReference>
<dbReference type="iPTMnet" id="Q96F25"/>
<dbReference type="PhosphoSitePlus" id="Q96F25"/>
<dbReference type="SwissPalm" id="Q96F25"/>
<dbReference type="BioMuta" id="ALG14"/>
<dbReference type="DMDM" id="74731649"/>
<dbReference type="jPOST" id="Q96F25"/>
<dbReference type="MassIVE" id="Q96F25"/>
<dbReference type="PaxDb" id="9606-ENSP00000359224"/>
<dbReference type="PeptideAtlas" id="Q96F25"/>
<dbReference type="ProteomicsDB" id="76488"/>
<dbReference type="Pumba" id="Q96F25"/>
<dbReference type="Antibodypedia" id="53384">
    <property type="antibodies" value="82 antibodies from 18 providers"/>
</dbReference>
<dbReference type="DNASU" id="199857"/>
<dbReference type="Ensembl" id="ENST00000370205.6">
    <property type="protein sequence ID" value="ENSP00000359224.4"/>
    <property type="gene ID" value="ENSG00000172339.10"/>
</dbReference>
<dbReference type="GeneID" id="199857"/>
<dbReference type="KEGG" id="hsa:199857"/>
<dbReference type="MANE-Select" id="ENST00000370205.6">
    <property type="protein sequence ID" value="ENSP00000359224.4"/>
    <property type="RefSeq nucleotide sequence ID" value="NM_144988.4"/>
    <property type="RefSeq protein sequence ID" value="NP_659425.1"/>
</dbReference>
<dbReference type="UCSC" id="uc001dra.3">
    <property type="organism name" value="human"/>
</dbReference>
<dbReference type="AGR" id="HGNC:28287"/>
<dbReference type="CTD" id="199857"/>
<dbReference type="DisGeNET" id="199857"/>
<dbReference type="GeneCards" id="ALG14"/>
<dbReference type="GeneReviews" id="ALG14"/>
<dbReference type="HGNC" id="HGNC:28287">
    <property type="gene designation" value="ALG14"/>
</dbReference>
<dbReference type="HPA" id="ENSG00000172339">
    <property type="expression patterns" value="Low tissue specificity"/>
</dbReference>
<dbReference type="MalaCards" id="ALG14"/>
<dbReference type="MIM" id="612866">
    <property type="type" value="gene"/>
</dbReference>
<dbReference type="MIM" id="616227">
    <property type="type" value="phenotype"/>
</dbReference>
<dbReference type="MIM" id="619031">
    <property type="type" value="phenotype"/>
</dbReference>
<dbReference type="MIM" id="619036">
    <property type="type" value="phenotype"/>
</dbReference>
<dbReference type="neXtProt" id="NX_Q96F25"/>
<dbReference type="OpenTargets" id="ENSG00000172339"/>
<dbReference type="Orphanet" id="353327">
    <property type="disease" value="Congenital myasthenic syndromes with glycosylation defect"/>
</dbReference>
<dbReference type="PharmGKB" id="PA142672628"/>
<dbReference type="VEuPathDB" id="HostDB:ENSG00000172339"/>
<dbReference type="eggNOG" id="KOG3339">
    <property type="taxonomic scope" value="Eukaryota"/>
</dbReference>
<dbReference type="GeneTree" id="ENSGT00390000002579"/>
<dbReference type="HOGENOM" id="CLU_064541_2_0_1"/>
<dbReference type="InParanoid" id="Q96F25"/>
<dbReference type="OMA" id="CRIVFIE"/>
<dbReference type="OrthoDB" id="17098at2759"/>
<dbReference type="PAN-GO" id="Q96F25">
    <property type="GO annotations" value="2 GO annotations based on evolutionary models"/>
</dbReference>
<dbReference type="PhylomeDB" id="Q96F25"/>
<dbReference type="TreeFam" id="TF105628"/>
<dbReference type="PathwayCommons" id="Q96F25"/>
<dbReference type="Reactome" id="R-HSA-446193">
    <property type="pathway name" value="Biosynthesis of the N-glycan precursor (dolichol lipid-linked oligosaccharide, LLO) and transfer to a nascent protein"/>
</dbReference>
<dbReference type="Reactome" id="R-HSA-5633231">
    <property type="pathway name" value="Defective ALG14 causes ALG14-CMS"/>
</dbReference>
<dbReference type="SignaLink" id="Q96F25"/>
<dbReference type="BioGRID-ORCS" id="199857">
    <property type="hits" value="669 hits in 1177 CRISPR screens"/>
</dbReference>
<dbReference type="ChiTaRS" id="ALG14">
    <property type="organism name" value="human"/>
</dbReference>
<dbReference type="GeneWiki" id="ALG14"/>
<dbReference type="GenomeRNAi" id="199857"/>
<dbReference type="Pharos" id="Q96F25">
    <property type="development level" value="Tbio"/>
</dbReference>
<dbReference type="PRO" id="PR:Q96F25"/>
<dbReference type="Proteomes" id="UP000005640">
    <property type="component" value="Chromosome 1"/>
</dbReference>
<dbReference type="RNAct" id="Q96F25">
    <property type="molecule type" value="protein"/>
</dbReference>
<dbReference type="Bgee" id="ENSG00000172339">
    <property type="expression patterns" value="Expressed in corpus epididymis and 165 other cell types or tissues"/>
</dbReference>
<dbReference type="GO" id="GO:0098554">
    <property type="term" value="C:cytoplasmic side of endoplasmic reticulum membrane"/>
    <property type="evidence" value="ECO:0000316"/>
    <property type="project" value="UniProtKB"/>
</dbReference>
<dbReference type="GO" id="GO:0005789">
    <property type="term" value="C:endoplasmic reticulum membrane"/>
    <property type="evidence" value="ECO:0000304"/>
    <property type="project" value="Reactome"/>
</dbReference>
<dbReference type="GO" id="GO:0043541">
    <property type="term" value="C:UDP-N-acetylglucosamine transferase complex"/>
    <property type="evidence" value="ECO:0000314"/>
    <property type="project" value="UniProtKB"/>
</dbReference>
<dbReference type="GO" id="GO:0043495">
    <property type="term" value="F:protein-membrane adaptor activity"/>
    <property type="evidence" value="ECO:0000316"/>
    <property type="project" value="UniProtKB"/>
</dbReference>
<dbReference type="GO" id="GO:0006488">
    <property type="term" value="P:dolichol-linked oligosaccharide biosynthetic process"/>
    <property type="evidence" value="ECO:0000314"/>
    <property type="project" value="UniProtKB"/>
</dbReference>
<dbReference type="GO" id="GO:0006487">
    <property type="term" value="P:protein N-linked glycosylation"/>
    <property type="evidence" value="ECO:0000314"/>
    <property type="project" value="UniProtKB"/>
</dbReference>
<dbReference type="FunFam" id="3.40.50.2000:FF:000098">
    <property type="entry name" value="UDP-N-acetylglucosamine transferase subunit ALG14 homolog"/>
    <property type="match status" value="1"/>
</dbReference>
<dbReference type="Gene3D" id="3.40.50.2000">
    <property type="entry name" value="Glycogen Phosphorylase B"/>
    <property type="match status" value="1"/>
</dbReference>
<dbReference type="InterPro" id="IPR013969">
    <property type="entry name" value="Oligosacch_biosynth_Alg14"/>
</dbReference>
<dbReference type="PANTHER" id="PTHR12154">
    <property type="entry name" value="GLYCOSYL TRANSFERASE-RELATED"/>
    <property type="match status" value="1"/>
</dbReference>
<dbReference type="PANTHER" id="PTHR12154:SF4">
    <property type="entry name" value="UDP-N-ACETYLGLUCOSAMINE TRANSFERASE SUBUNIT ALG14 HOMOLOG"/>
    <property type="match status" value="1"/>
</dbReference>
<dbReference type="Pfam" id="PF08660">
    <property type="entry name" value="Alg14"/>
    <property type="match status" value="1"/>
</dbReference>
<dbReference type="SUPFAM" id="SSF53756">
    <property type="entry name" value="UDP-Glycosyltransferase/glycogen phosphorylase"/>
    <property type="match status" value="1"/>
</dbReference>
<accession>Q96F25</accession>
<accession>A8K030</accession>
<evidence type="ECO:0000250" key="1">
    <source>
        <dbReference type="UniProtKB" id="P38242"/>
    </source>
</evidence>
<evidence type="ECO:0000255" key="2"/>
<evidence type="ECO:0000269" key="3">
    <source>
    </source>
</evidence>
<evidence type="ECO:0000269" key="4">
    <source>
    </source>
</evidence>
<evidence type="ECO:0000269" key="5">
    <source>
    </source>
</evidence>
<evidence type="ECO:0000269" key="6">
    <source>
    </source>
</evidence>
<evidence type="ECO:0000269" key="7">
    <source>
    </source>
</evidence>
<evidence type="ECO:0000305" key="8"/>
<evidence type="ECO:0000305" key="9">
    <source>
    </source>
</evidence>
<evidence type="ECO:0000312" key="10">
    <source>
        <dbReference type="HGNC" id="HGNC:28287"/>
    </source>
</evidence>
<proteinExistence type="evidence at protein level"/>
<organism>
    <name type="scientific">Homo sapiens</name>
    <name type="common">Human</name>
    <dbReference type="NCBI Taxonomy" id="9606"/>
    <lineage>
        <taxon>Eukaryota</taxon>
        <taxon>Metazoa</taxon>
        <taxon>Chordata</taxon>
        <taxon>Craniata</taxon>
        <taxon>Vertebrata</taxon>
        <taxon>Euteleostomi</taxon>
        <taxon>Mammalia</taxon>
        <taxon>Eutheria</taxon>
        <taxon>Euarchontoglires</taxon>
        <taxon>Primates</taxon>
        <taxon>Haplorrhini</taxon>
        <taxon>Catarrhini</taxon>
        <taxon>Hominidae</taxon>
        <taxon>Homo</taxon>
    </lineage>
</organism>
<gene>
    <name evidence="10" type="primary">ALG14</name>
</gene>
<keyword id="KW-1004">Congenital myasthenic syndrome</keyword>
<keyword id="KW-0225">Disease variant</keyword>
<keyword id="KW-0256">Endoplasmic reticulum</keyword>
<keyword id="KW-0887">Epilepsy</keyword>
<keyword id="KW-0991">Intellectual disability</keyword>
<keyword id="KW-0472">Membrane</keyword>
<keyword id="KW-0523">Neurodegeneration</keyword>
<keyword id="KW-1267">Proteomics identification</keyword>
<keyword id="KW-1185">Reference proteome</keyword>
<keyword id="KW-0812">Transmembrane</keyword>
<keyword id="KW-1133">Transmembrane helix</keyword>
<name>ALG14_HUMAN</name>
<protein>
    <recommendedName>
        <fullName evidence="9">UDP-N-acetylglucosamine transferase subunit ALG14</fullName>
    </recommendedName>
    <alternativeName>
        <fullName evidence="10">Asparagine-linked glycosylation 14 homolog</fullName>
    </alternativeName>
</protein>
<reference key="1">
    <citation type="journal article" date="2004" name="Nat. Genet.">
        <title>Complete sequencing and characterization of 21,243 full-length human cDNAs.</title>
        <authorList>
            <person name="Ota T."/>
            <person name="Suzuki Y."/>
            <person name="Nishikawa T."/>
            <person name="Otsuki T."/>
            <person name="Sugiyama T."/>
            <person name="Irie R."/>
            <person name="Wakamatsu A."/>
            <person name="Hayashi K."/>
            <person name="Sato H."/>
            <person name="Nagai K."/>
            <person name="Kimura K."/>
            <person name="Makita H."/>
            <person name="Sekine M."/>
            <person name="Obayashi M."/>
            <person name="Nishi T."/>
            <person name="Shibahara T."/>
            <person name="Tanaka T."/>
            <person name="Ishii S."/>
            <person name="Yamamoto J."/>
            <person name="Saito K."/>
            <person name="Kawai Y."/>
            <person name="Isono Y."/>
            <person name="Nakamura Y."/>
            <person name="Nagahari K."/>
            <person name="Murakami K."/>
            <person name="Yasuda T."/>
            <person name="Iwayanagi T."/>
            <person name="Wagatsuma M."/>
            <person name="Shiratori A."/>
            <person name="Sudo H."/>
            <person name="Hosoiri T."/>
            <person name="Kaku Y."/>
            <person name="Kodaira H."/>
            <person name="Kondo H."/>
            <person name="Sugawara M."/>
            <person name="Takahashi M."/>
            <person name="Kanda K."/>
            <person name="Yokoi T."/>
            <person name="Furuya T."/>
            <person name="Kikkawa E."/>
            <person name="Omura Y."/>
            <person name="Abe K."/>
            <person name="Kamihara K."/>
            <person name="Katsuta N."/>
            <person name="Sato K."/>
            <person name="Tanikawa M."/>
            <person name="Yamazaki M."/>
            <person name="Ninomiya K."/>
            <person name="Ishibashi T."/>
            <person name="Yamashita H."/>
            <person name="Murakawa K."/>
            <person name="Fujimori K."/>
            <person name="Tanai H."/>
            <person name="Kimata M."/>
            <person name="Watanabe M."/>
            <person name="Hiraoka S."/>
            <person name="Chiba Y."/>
            <person name="Ishida S."/>
            <person name="Ono Y."/>
            <person name="Takiguchi S."/>
            <person name="Watanabe S."/>
            <person name="Yosida M."/>
            <person name="Hotuta T."/>
            <person name="Kusano J."/>
            <person name="Kanehori K."/>
            <person name="Takahashi-Fujii A."/>
            <person name="Hara H."/>
            <person name="Tanase T.-O."/>
            <person name="Nomura Y."/>
            <person name="Togiya S."/>
            <person name="Komai F."/>
            <person name="Hara R."/>
            <person name="Takeuchi K."/>
            <person name="Arita M."/>
            <person name="Imose N."/>
            <person name="Musashino K."/>
            <person name="Yuuki H."/>
            <person name="Oshima A."/>
            <person name="Sasaki N."/>
            <person name="Aotsuka S."/>
            <person name="Yoshikawa Y."/>
            <person name="Matsunawa H."/>
            <person name="Ichihara T."/>
            <person name="Shiohata N."/>
            <person name="Sano S."/>
            <person name="Moriya S."/>
            <person name="Momiyama H."/>
            <person name="Satoh N."/>
            <person name="Takami S."/>
            <person name="Terashima Y."/>
            <person name="Suzuki O."/>
            <person name="Nakagawa S."/>
            <person name="Senoh A."/>
            <person name="Mizoguchi H."/>
            <person name="Goto Y."/>
            <person name="Shimizu F."/>
            <person name="Wakebe H."/>
            <person name="Hishigaki H."/>
            <person name="Watanabe T."/>
            <person name="Sugiyama A."/>
            <person name="Takemoto M."/>
            <person name="Kawakami B."/>
            <person name="Yamazaki M."/>
            <person name="Watanabe K."/>
            <person name="Kumagai A."/>
            <person name="Itakura S."/>
            <person name="Fukuzumi Y."/>
            <person name="Fujimori Y."/>
            <person name="Komiyama M."/>
            <person name="Tashiro H."/>
            <person name="Tanigami A."/>
            <person name="Fujiwara T."/>
            <person name="Ono T."/>
            <person name="Yamada K."/>
            <person name="Fujii Y."/>
            <person name="Ozaki K."/>
            <person name="Hirao M."/>
            <person name="Ohmori Y."/>
            <person name="Kawabata A."/>
            <person name="Hikiji T."/>
            <person name="Kobatake N."/>
            <person name="Inagaki H."/>
            <person name="Ikema Y."/>
            <person name="Okamoto S."/>
            <person name="Okitani R."/>
            <person name="Kawakami T."/>
            <person name="Noguchi S."/>
            <person name="Itoh T."/>
            <person name="Shigeta K."/>
            <person name="Senba T."/>
            <person name="Matsumura K."/>
            <person name="Nakajima Y."/>
            <person name="Mizuno T."/>
            <person name="Morinaga M."/>
            <person name="Sasaki M."/>
            <person name="Togashi T."/>
            <person name="Oyama M."/>
            <person name="Hata H."/>
            <person name="Watanabe M."/>
            <person name="Komatsu T."/>
            <person name="Mizushima-Sugano J."/>
            <person name="Satoh T."/>
            <person name="Shirai Y."/>
            <person name="Takahashi Y."/>
            <person name="Nakagawa K."/>
            <person name="Okumura K."/>
            <person name="Nagase T."/>
            <person name="Nomura N."/>
            <person name="Kikuchi H."/>
            <person name="Masuho Y."/>
            <person name="Yamashita R."/>
            <person name="Nakai K."/>
            <person name="Yada T."/>
            <person name="Nakamura Y."/>
            <person name="Ohara O."/>
            <person name="Isogai T."/>
            <person name="Sugano S."/>
        </authorList>
    </citation>
    <scope>NUCLEOTIDE SEQUENCE [LARGE SCALE MRNA]</scope>
</reference>
<reference key="2">
    <citation type="submission" date="2005-09" db="EMBL/GenBank/DDBJ databases">
        <authorList>
            <person name="Mural R.J."/>
            <person name="Istrail S."/>
            <person name="Sutton G.G."/>
            <person name="Florea L."/>
            <person name="Halpern A.L."/>
            <person name="Mobarry C.M."/>
            <person name="Lippert R."/>
            <person name="Walenz B."/>
            <person name="Shatkay H."/>
            <person name="Dew I."/>
            <person name="Miller J.R."/>
            <person name="Flanigan M.J."/>
            <person name="Edwards N.J."/>
            <person name="Bolanos R."/>
            <person name="Fasulo D."/>
            <person name="Halldorsson B.V."/>
            <person name="Hannenhalli S."/>
            <person name="Turner R."/>
            <person name="Yooseph S."/>
            <person name="Lu F."/>
            <person name="Nusskern D.R."/>
            <person name="Shue B.C."/>
            <person name="Zheng X.H."/>
            <person name="Zhong F."/>
            <person name="Delcher A.L."/>
            <person name="Huson D.H."/>
            <person name="Kravitz S.A."/>
            <person name="Mouchard L."/>
            <person name="Reinert K."/>
            <person name="Remington K.A."/>
            <person name="Clark A.G."/>
            <person name="Waterman M.S."/>
            <person name="Eichler E.E."/>
            <person name="Adams M.D."/>
            <person name="Hunkapiller M.W."/>
            <person name="Myers E.W."/>
            <person name="Venter J.C."/>
        </authorList>
    </citation>
    <scope>NUCLEOTIDE SEQUENCE [LARGE SCALE GENOMIC DNA]</scope>
</reference>
<reference key="3">
    <citation type="journal article" date="2004" name="Genome Res.">
        <title>The status, quality, and expansion of the NIH full-length cDNA project: the Mammalian Gene Collection (MGC).</title>
        <authorList>
            <consortium name="The MGC Project Team"/>
        </authorList>
    </citation>
    <scope>NUCLEOTIDE SEQUENCE [LARGE SCALE MRNA]</scope>
    <source>
        <tissue>Pancreas</tissue>
    </source>
</reference>
<reference key="4">
    <citation type="journal article" date="2005" name="J. Biol. Chem.">
        <title>Alg14 recruits Alg13 to the cytoplasmic face of the endoplasmic reticulum to form a novel bipartite UDP-N-acetylglucosamine transferase required for the second step of N-linked glycosylation.</title>
        <authorList>
            <person name="Gao X.-D."/>
            <person name="Tachikawa H."/>
            <person name="Sato T."/>
            <person name="Jigami Y."/>
            <person name="Dean N."/>
        </authorList>
    </citation>
    <scope>FUNCTION</scope>
    <scope>SUBUNIT</scope>
    <scope>SUBCELLULAR LOCATION</scope>
</reference>
<reference key="5">
    <citation type="journal article" date="2022" name="Front. Cell Dev. Biol.">
        <title>An in vitro assay for enzymatic studies on human ALG13/14 heterodimeric UDP-N-acetylglucosamine transferase.</title>
        <authorList>
            <person name="Wang C.D."/>
            <person name="Xu S."/>
            <person name="Chen S."/>
            <person name="Chen Z.H."/>
            <person name="Dean N."/>
            <person name="Wang N."/>
            <person name="Gao X.D."/>
        </authorList>
    </citation>
    <scope>FUNCTION</scope>
    <scope>SUBUNIT</scope>
    <scope>CHARACTERIZATION OF VARIANT CMS15 LEU-65</scope>
    <scope>CHARACTERIZATION OF VARIANT MEPCA ASN-74; GLN-109 AND GLY-141</scope>
</reference>
<reference key="6">
    <citation type="journal article" date="2013" name="Brain">
        <title>Congenital myasthenic syndromes due to mutations in ALG2 and ALG14.</title>
        <authorList>
            <consortium name="WGS500 Consortium"/>
            <person name="Cossins J."/>
            <person name="Belaya K."/>
            <person name="Hicks D."/>
            <person name="Salih M.A."/>
            <person name="Finlayson S."/>
            <person name="Carboni N."/>
            <person name="Liu W.W."/>
            <person name="Maxwell S."/>
            <person name="Zoltowska K."/>
            <person name="Farsani G.T."/>
            <person name="Laval S."/>
            <person name="Seidhamed M.Z."/>
            <person name="Donnelly P."/>
            <person name="Bentley D."/>
            <person name="McGowan S.J."/>
            <person name="Muller J."/>
            <person name="Palace J."/>
            <person name="Lochmuller H."/>
            <person name="Beeson D."/>
            <person name="Donnelly P."/>
            <person name="Bell J."/>
            <person name="Bentley D."/>
            <person name="McVean G."/>
            <person name="Ratcfliffe P."/>
            <person name="Taylor J."/>
            <person name="Wilkie A."/>
            <person name="Donnelly P."/>
            <person name="Broxholme J."/>
            <person name="Buck D."/>
            <person name="Cazier J.B."/>
            <person name="Cornall R."/>
            <person name="Gregory L."/>
            <person name="Knight J."/>
            <person name="Lunter G."/>
            <person name="McVean G."/>
            <person name="Taylor J."/>
            <person name="Tomlinson I."/>
            <person name="Wilkie A."/>
            <person name="Buck D."/>
            <person name="Allan C."/>
            <person name="Attar M."/>
            <person name="Green A."/>
            <person name="Gregory L."/>
            <person name="Humphray S."/>
            <person name="Kingsbury Z."/>
            <person name="Lamble S."/>
            <person name="Lonie L."/>
            <person name="Pagnamenta A."/>
            <person name="Piazza P."/>
            <person name="Polanco G."/>
            <person name="Trebes A."/>
            <person name="McVean G."/>
            <person name="Donnelly P."/>
            <person name="Cazier J.B."/>
            <person name="Broxholme J."/>
            <person name="Copley R."/>
            <person name="Fiddy S."/>
            <person name="Grocock R."/>
            <person name="Hatton E."/>
            <person name="Holmes C."/>
            <person name="Hughes L."/>
            <person name="Humburg P."/>
            <person name="Kanapin A."/>
            <person name="Lise S."/>
            <person name="Lunter G."/>
            <person name="Martin H."/>
            <person name="Murray L."/>
            <person name="McCarthy D."/>
            <person name="Rimmer A."/>
            <person name="Sahgal N."/>
            <person name="Wright B."/>
            <person name="Yau C."/>
        </authorList>
    </citation>
    <scope>INVOLVEMENT IN CMS15</scope>
    <scope>VARIANTS CMS15 LEU-65 AND 104-ARG--VAL-216 DEL</scope>
    <scope>CHARACTERIZATION OF VARIANT CMS15 LEU-65</scope>
</reference>
<reference key="7">
    <citation type="journal article" date="2017" name="Neurology">
        <title>Early and lethal neurodegeneration with myasthenic and myopathic features: A new ALG14-CDG.</title>
        <authorList>
            <person name="Schorling D.C."/>
            <person name="Rost S."/>
            <person name="Lefeber D.J."/>
            <person name="Brady L."/>
            <person name="Mueller C.R."/>
            <person name="Korinthenberg R."/>
            <person name="Tarnopolsky M."/>
            <person name="Boennemann C.G."/>
            <person name="Rodenburg R.J."/>
            <person name="Bugiani M."/>
            <person name="Beytia M."/>
            <person name="Krueger M."/>
            <person name="van der Knaap M."/>
            <person name="Kirschner J."/>
        </authorList>
    </citation>
    <scope>INVOLVEMENT IN MEPCA</scope>
    <scope>VARIANTS MEPCA ASN-74; GLN-109 AND GLY-141</scope>
</reference>
<reference key="8">
    <citation type="journal article" date="2018" name="Clin. Genet.">
        <title>Genomic screening in rare disorders: New mutations and phenotypes, highlighting ALG14 as a novel cause of severe intellectual disability.</title>
        <authorList>
            <person name="Kvarnung M."/>
            <person name="Taylan F."/>
            <person name="Nilsson D."/>
            <person name="Anderlid B.M."/>
            <person name="Malmgren H."/>
            <person name="Lagerstedt-Robinson K."/>
            <person name="Holmberg E."/>
            <person name="Burstedt M."/>
            <person name="Nordenskjoeld M."/>
            <person name="Nordgren A."/>
            <person name="Lundberg E.S."/>
        </authorList>
    </citation>
    <scope>INVOLVEMENT IN IDDEBF</scope>
</reference>
<feature type="chain" id="PRO_0000265116" description="UDP-N-acetylglucosamine transferase subunit ALG14">
    <location>
        <begin position="1"/>
        <end position="216"/>
    </location>
</feature>
<feature type="topological domain" description="Lumenal" evidence="1">
    <location>
        <begin position="1"/>
        <end position="3"/>
    </location>
</feature>
<feature type="transmembrane region" description="Helical" evidence="2">
    <location>
        <begin position="4"/>
        <end position="24"/>
    </location>
</feature>
<feature type="topological domain" description="Cytoplasmic" evidence="1">
    <location>
        <begin position="25"/>
        <end position="216"/>
    </location>
</feature>
<feature type="sequence variant" id="VAR_029635" description="In dbSNP:rs11165298.">
    <original>V</original>
    <variation>M</variation>
    <location>
        <position position="14"/>
    </location>
</feature>
<feature type="sequence variant" id="VAR_073331" description="In CMS15; results in a severe reduction in protein expression; loss of function in dolichol-linked oligosaccharide biosynthetic process; dbSNP:rs730882050." evidence="4 7">
    <original>P</original>
    <variation>L</variation>
    <location>
        <position position="65"/>
    </location>
</feature>
<feature type="sequence variant" id="VAR_084707" description="In MEPCA; decreased function in dolichol-linked oligosaccharide biosynthetic process; dbSNP:rs769114543." evidence="5 7">
    <original>D</original>
    <variation>N</variation>
    <location>
        <position position="74"/>
    </location>
</feature>
<feature type="sequence variant" id="VAR_084708" description="In CMS15." evidence="4">
    <location>
        <begin position="104"/>
        <end position="216"/>
    </location>
</feature>
<feature type="sequence variant" id="VAR_084709" description="In MEPCA; uncertain significance; decreased function in dolichol-linked oligosaccharide biosynthetic process; dbSNP:rs199689080." evidence="5 7">
    <original>R</original>
    <variation>Q</variation>
    <location>
        <position position="109"/>
    </location>
</feature>
<feature type="sequence variant" id="VAR_084710" description="In MEPCA; uncertain significance; decreased function in dolichol-linked oligosaccharide biosynthetic process; dbSNP:rs139005007." evidence="5 7">
    <original>V</original>
    <variation>G</variation>
    <location>
        <position position="141"/>
    </location>
</feature>